<reference key="1">
    <citation type="journal article" date="1991" name="Proc. Natl. Acad. Sci. U.S.A.">
        <title>Amino acid sequence of Fel dI, the major allergen of the domestic cat: protein sequence analysis and cDNA cloning.</title>
        <authorList>
            <person name="Morgenstern J.P."/>
            <person name="Griffith I.J."/>
            <person name="Brauer A.W."/>
            <person name="Rogers B.L."/>
            <person name="Bond J.F."/>
            <person name="Chapman M.D."/>
            <person name="Kuo M.-C."/>
        </authorList>
    </citation>
    <scope>NUCLEOTIDE SEQUENCE [MRNA]</scope>
    <scope>PROTEIN SEQUENCE OF 18-100</scope>
</reference>
<reference key="2">
    <citation type="journal article" date="1992" name="Gene">
        <title>Expression and genomic structure of the genes encoding FdI, the major allergen from the domestic cat.</title>
        <authorList>
            <person name="Griffith I.J."/>
            <person name="Craig S."/>
            <person name="Pollock J."/>
            <person name="Yu X.-B."/>
            <person name="Morgenstern J.P."/>
            <person name="Rogers B.L."/>
        </authorList>
    </citation>
    <scope>NUCLEOTIDE SEQUENCE</scope>
    <scope>ALTERNATIVE SPLICING</scope>
    <scope>VARIANTS</scope>
    <source>
        <tissue>Liver</tissue>
    </source>
</reference>
<reference key="3">
    <citation type="journal article" date="1991" name="Mol. Immunol.">
        <title>Studies on the biochemical structure of the major cat allergen Felis domesticus I.</title>
        <authorList>
            <person name="Duffort O.A."/>
            <person name="Carreira J."/>
            <person name="Nitti G."/>
            <person name="Polo F."/>
            <person name="Lombardero M."/>
        </authorList>
    </citation>
    <scope>PROTEIN SEQUENCE OF 18-37</scope>
    <scope>CHARACTERIZATION</scope>
</reference>
<reference key="4">
    <citation type="journal article" date="1984" name="J. Allergy Clin. Immunol.">
        <title>Cat allergen 1: biochemical, antigenic, and allergenic properties.</title>
        <authorList>
            <person name="Leitermann K."/>
            <person name="Ohman J.L. Jr."/>
        </authorList>
    </citation>
    <scope>CHARACTERIZATION</scope>
</reference>
<reference key="5">
    <citation type="journal article" date="2003" name="J. Biol. Chem.">
        <title>The crystal structure of the major cat allergen Fel d 1, a member of the secretoglobin family.</title>
        <authorList>
            <person name="Kaiser L."/>
            <person name="Gronlund H."/>
            <person name="Sandalova T."/>
            <person name="Ljunggren H.G."/>
            <person name="van Hage-Hamsten M."/>
            <person name="Achour A."/>
            <person name="Schneider G."/>
        </authorList>
    </citation>
    <scope>X-RAY CRYSTALLOGRAPHY (1.85 ANGSTROMS) OF 18-109</scope>
</reference>
<organism>
    <name type="scientific">Felis catus</name>
    <name type="common">Cat</name>
    <name type="synonym">Felis silvestris catus</name>
    <dbReference type="NCBI Taxonomy" id="9685"/>
    <lineage>
        <taxon>Eukaryota</taxon>
        <taxon>Metazoa</taxon>
        <taxon>Chordata</taxon>
        <taxon>Craniata</taxon>
        <taxon>Vertebrata</taxon>
        <taxon>Euteleostomi</taxon>
        <taxon>Mammalia</taxon>
        <taxon>Eutheria</taxon>
        <taxon>Laurasiatheria</taxon>
        <taxon>Carnivora</taxon>
        <taxon>Feliformia</taxon>
        <taxon>Felidae</taxon>
        <taxon>Felinae</taxon>
        <taxon>Felis</taxon>
    </lineage>
</organism>
<proteinExistence type="evidence at protein level"/>
<dbReference type="EMBL" id="M77341">
    <property type="protein sequence ID" value="AAC41616.1"/>
    <property type="molecule type" value="mRNA"/>
</dbReference>
<dbReference type="EMBL" id="X62478">
    <property type="protein sequence ID" value="CAA44345.1"/>
    <property type="molecule type" value="Genomic_DNA"/>
</dbReference>
<dbReference type="PIR" id="B53283">
    <property type="entry name" value="B53283"/>
</dbReference>
<dbReference type="PIR" id="C56413">
    <property type="entry name" value="C56413"/>
</dbReference>
<dbReference type="PIR" id="JC1127">
    <property type="entry name" value="JC1127"/>
</dbReference>
<dbReference type="RefSeq" id="NP_001041619.1">
    <molecule id="P30440-1"/>
    <property type="nucleotide sequence ID" value="NM_001048154.1"/>
</dbReference>
<dbReference type="PDB" id="1PUO">
    <property type="method" value="X-ray"/>
    <property type="resolution" value="1.85 A"/>
    <property type="chains" value="A/B=18-109"/>
</dbReference>
<dbReference type="PDB" id="1ZKR">
    <property type="method" value="X-ray"/>
    <property type="resolution" value="1.64 A"/>
    <property type="chains" value="A/B=18-93"/>
</dbReference>
<dbReference type="PDB" id="2EJN">
    <property type="method" value="X-ray"/>
    <property type="resolution" value="1.64 A"/>
    <property type="chains" value="A/B=18-93"/>
</dbReference>
<dbReference type="PDB" id="5VYF">
    <property type="method" value="X-ray"/>
    <property type="resolution" value="2.90 A"/>
    <property type="chains" value="C/F=18-109"/>
</dbReference>
<dbReference type="PDBsum" id="1PUO"/>
<dbReference type="PDBsum" id="1ZKR"/>
<dbReference type="PDBsum" id="2EJN"/>
<dbReference type="PDBsum" id="5VYF"/>
<dbReference type="SMR" id="P30440"/>
<dbReference type="Allergome" id="3278">
    <property type="allergen name" value="Fel d 1.0101"/>
</dbReference>
<dbReference type="Allergome" id="345">
    <property type="allergen name" value="Fel d 1"/>
</dbReference>
<dbReference type="GlyCosmos" id="P30440">
    <property type="glycosylation" value="1 site, No reported glycans"/>
</dbReference>
<dbReference type="PaxDb" id="9685-ENSFCAP00000019678"/>
<dbReference type="ABCD" id="P30440">
    <property type="antibodies" value="4 sequenced antibodies"/>
</dbReference>
<dbReference type="GeneID" id="677879"/>
<dbReference type="KEGG" id="fca:677879"/>
<dbReference type="CTD" id="677879"/>
<dbReference type="eggNOG" id="ENOG502RU0W">
    <property type="taxonomic scope" value="Eukaryota"/>
</dbReference>
<dbReference type="InParanoid" id="P30440"/>
<dbReference type="OrthoDB" id="9591489at2759"/>
<dbReference type="EvolutionaryTrace" id="P30440"/>
<dbReference type="Proteomes" id="UP000011712">
    <property type="component" value="Unplaced"/>
</dbReference>
<dbReference type="GO" id="GO:0005615">
    <property type="term" value="C:extracellular space"/>
    <property type="evidence" value="ECO:0007669"/>
    <property type="project" value="InterPro"/>
</dbReference>
<dbReference type="CDD" id="cd00633">
    <property type="entry name" value="Secretoglobin"/>
    <property type="match status" value="1"/>
</dbReference>
<dbReference type="Gene3D" id="1.20.920.50">
    <property type="match status" value="1"/>
</dbReference>
<dbReference type="InterPro" id="IPR015332">
    <property type="entry name" value="CH2-like"/>
</dbReference>
<dbReference type="InterPro" id="IPR016126">
    <property type="entry name" value="Secretoglobin"/>
</dbReference>
<dbReference type="InterPro" id="IPR053723">
    <property type="entry name" value="Secretoglobin_Domain_sf"/>
</dbReference>
<dbReference type="InterPro" id="IPR035960">
    <property type="entry name" value="Secretoglobin_sf"/>
</dbReference>
<dbReference type="PANTHER" id="PTHR31708">
    <property type="entry name" value="ABPBG26-RELATED"/>
    <property type="match status" value="1"/>
</dbReference>
<dbReference type="PANTHER" id="PTHR31708:SF0">
    <property type="entry name" value="ABPBG26-RELATED"/>
    <property type="match status" value="1"/>
</dbReference>
<dbReference type="Pfam" id="PF09252">
    <property type="entry name" value="Feld-I_B"/>
    <property type="match status" value="1"/>
</dbReference>
<dbReference type="SUPFAM" id="SSF48201">
    <property type="entry name" value="Uteroglobin-like"/>
    <property type="match status" value="1"/>
</dbReference>
<dbReference type="PROSITE" id="PS51311">
    <property type="entry name" value="SCGB"/>
    <property type="match status" value="1"/>
</dbReference>
<sequence>MRGALLVLALLVTQALGVKMAETCPIFYDVFFAVANGNELLLDLSLTKVNATEPERTAMKKIQDCYVENGLISRVLDGLVMTTISSSKDCMGEAVQNTVEDLKLNTLGR</sequence>
<protein>
    <recommendedName>
        <fullName>Major allergen I polypeptide chain 2</fullName>
    </recommendedName>
    <alternativeName>
        <fullName>AG4</fullName>
    </alternativeName>
    <alternativeName>
        <fullName>Allergen Cat-1</fullName>
    </alternativeName>
    <alternativeName>
        <fullName>Allergen Fel d I-B</fullName>
        <shortName>Allergen FdI</shortName>
    </alternativeName>
    <allergenName>Fel d 1-B</allergenName>
</protein>
<comment type="subunit">
    <text>Heterotetramer composed of two non-covalently linked disulfide-linked heterodimer of chains 1 and 2.</text>
</comment>
<comment type="subcellular location">
    <subcellularLocation>
        <location>Secreted</location>
    </subcellularLocation>
</comment>
<comment type="alternative products">
    <event type="alternative splicing"/>
    <isoform>
        <id>P30440-1</id>
        <name>1</name>
        <name>CH2L</name>
        <sequence type="displayed"/>
    </isoform>
    <isoform>
        <id>P30440-2</id>
        <name>2</name>
        <name>CH2S</name>
        <sequence type="described" ref="VSP_004249"/>
    </isoform>
    <isoform>
        <id>P30440-3</id>
        <name>3</name>
        <name>CH2ST</name>
        <name>Truncated</name>
        <sequence type="described" ref="VSP_004248"/>
    </isoform>
    <text>Experimental confirmation may be lacking for some isoforms.</text>
</comment>
<comment type="tissue specificity">
    <text>The long form is preferentially expressed in the salivary gland, while the short form is preferentially expressed in the skin.</text>
</comment>
<comment type="allergen">
    <text>Causes an allergic reaction in human. Binds to IgE. Major allergen produced by the domestic cat. Implicated as an asthma-inducing agent in human. This protein is sticky and easily adheres to walls, carpet, clothing, furniture and bedding.</text>
</comment>
<comment type="similarity">
    <text evidence="3">Belongs to the secretoglobin family.</text>
</comment>
<gene>
    <name type="primary">CH2</name>
</gene>
<keyword id="KW-0002">3D-structure</keyword>
<keyword id="KW-0020">Allergen</keyword>
<keyword id="KW-0025">Alternative splicing</keyword>
<keyword id="KW-0903">Direct protein sequencing</keyword>
<keyword id="KW-1015">Disulfide bond</keyword>
<keyword id="KW-0325">Glycoprotein</keyword>
<keyword id="KW-1185">Reference proteome</keyword>
<keyword id="KW-0964">Secreted</keyword>
<keyword id="KW-0732">Signal</keyword>
<feature type="signal peptide" evidence="1 2">
    <location>
        <begin position="1"/>
        <end position="17"/>
    </location>
</feature>
<feature type="chain" id="PRO_0000021248" description="Major allergen I polypeptide chain 2">
    <location>
        <begin position="18"/>
        <end position="109"/>
    </location>
</feature>
<feature type="glycosylation site" description="N-linked (GlcNAc...) asparagine">
    <location>
        <position position="50"/>
    </location>
</feature>
<feature type="disulfide bond" description="Interchain (with C-92 in chain 1)">
    <location>
        <position position="24"/>
    </location>
</feature>
<feature type="disulfide bond" description="Interchain (with C-66 in chain 1)">
    <location>
        <position position="65"/>
    </location>
</feature>
<feature type="disulfide bond" description="Interchain (with C-25 in chain 1)">
    <location>
        <position position="90"/>
    </location>
</feature>
<feature type="splice variant" id="VSP_004248" description="In isoform 3." evidence="3">
    <original>TTISSSKDCMGEAVQNTVEDLKLNTLGR</original>
    <variation>PSTNIAWVKQFRTP</variation>
    <location>
        <begin position="82"/>
        <end position="109"/>
    </location>
</feature>
<feature type="splice variant" id="VSP_004249" description="In isoform 2." evidence="3">
    <original>TTISSSKD</original>
    <variation>IAINEY</variation>
    <location>
        <begin position="82"/>
        <end position="89"/>
    </location>
</feature>
<feature type="sequence variant" description="In CH2LV.">
    <original>I</original>
    <variation>L</variation>
    <location>
        <position position="72"/>
    </location>
</feature>
<feature type="sequence variant" description="In CH2SV.">
    <original>I</original>
    <variation>V</variation>
    <location>
        <position position="72"/>
    </location>
</feature>
<feature type="sequence variant" description="In CH2SV.">
    <original>RV</original>
    <variation>KF</variation>
    <location>
        <begin position="74"/>
        <end position="75"/>
    </location>
</feature>
<feature type="sequence variant" description="In CH2LV.">
    <original>M</original>
    <variation>T</variation>
    <location>
        <position position="91"/>
    </location>
</feature>
<feature type="sequence variant" description="In CH2SV.">
    <original>Q</original>
    <variation>E</variation>
    <location>
        <position position="96"/>
    </location>
</feature>
<feature type="sequence variant" description="In CH2SV.">
    <original>N</original>
    <variation>K</variation>
    <location>
        <position position="105"/>
    </location>
</feature>
<feature type="sequence conflict" description="In Ref. 3; AA sequence." evidence="3" ref="3">
    <original>C</original>
    <variation>F</variation>
    <location>
        <position position="24"/>
    </location>
</feature>
<feature type="sequence conflict" description="In Ref. 3; AA sequence." evidence="3" ref="3">
    <original>F</original>
    <variation>T</variation>
    <location>
        <position position="32"/>
    </location>
</feature>
<feature type="strand" evidence="4">
    <location>
        <begin position="19"/>
        <end position="23"/>
    </location>
</feature>
<feature type="helix" evidence="4">
    <location>
        <begin position="25"/>
        <end position="35"/>
    </location>
</feature>
<feature type="helix" evidence="4">
    <location>
        <begin position="39"/>
        <end position="48"/>
    </location>
</feature>
<feature type="helix" evidence="4">
    <location>
        <begin position="53"/>
        <end position="68"/>
    </location>
</feature>
<feature type="helix" evidence="4">
    <location>
        <begin position="71"/>
        <end position="73"/>
    </location>
</feature>
<feature type="strand" evidence="4">
    <location>
        <begin position="74"/>
        <end position="76"/>
    </location>
</feature>
<feature type="helix" evidence="4">
    <location>
        <begin position="77"/>
        <end position="85"/>
    </location>
</feature>
<feature type="turn" evidence="4">
    <location>
        <begin position="88"/>
        <end position="90"/>
    </location>
</feature>
<name>FEL1B_FELCA</name>
<evidence type="ECO:0000269" key="1">
    <source>
    </source>
</evidence>
<evidence type="ECO:0000269" key="2">
    <source>
    </source>
</evidence>
<evidence type="ECO:0000305" key="3"/>
<evidence type="ECO:0007829" key="4">
    <source>
        <dbReference type="PDB" id="1ZKR"/>
    </source>
</evidence>
<accession>P30440</accession>